<sequence>MSHYTGIILKLESDRAIVLTDGLDFMELKLKPGMQRGQHVIFDESDLYSAGLITRYKSIIMPFSAFAAAAAVFLVILFSLRFVSISQEYAYIDVDINPSIGLVIDKKEKVIDAKPLNNDAKPILDEAAPKDMPLYDALSKILDISKKNGYINSADNIVLFSASINSGRNNVSESDKGIQEIISTLKDVAKDAGVKFEIIPSTEEDRQKALDQNLSMGRYAIYVKAVEEGVNLNLEDARNLSVSEILGKVNIGKFAISDTPEDSGIMPAISVPAEPVPSVTPAYTAVPEKTEAQPVDIPKSSPTPASFTAHVPTPPKTPSIPHTSGPAIVHTPAADKTTPTFTGSSTPVPTNVVAIASTPVPVSTPKPVSTPAYSSTPTPESTPVPVSTPKPASTPTPASTPKPVSTPTHVSTPKPISTPTSTPRPASTPKPTSTPTPESTPKPTSTPAPVSTPTSTPIPTYTSTPASTPIPAYTSTPTSIPTLTPATSPAPTSSPTPIPSPAPTETDLLTKIELQAYNHIRTSETKELQPRIKLINTGNTPITLSEVKIRYYYTKDQVINEIYTCDWSNITSSKITGTVVQMSNPKPNADSYVEIGFTNSAGVLNPGEYVEIISRIGNSYALSLATPPYSEWNYMYDQNSDYSFNNSSSDFVVWDKITVYISGTLYWGIEP</sequence>
<gene>
    <name evidence="8" type="primary">rsgI2</name>
    <name evidence="10" type="ordered locus">Cthe_0267</name>
</gene>
<organism>
    <name type="scientific">Acetivibrio thermocellus (strain ATCC 27405 / DSM 1237 / JCM 9322 / NBRC 103400 / NCIMB 10682 / NRRL B-4536 / VPI 7372)</name>
    <name type="common">Clostridium thermocellum</name>
    <dbReference type="NCBI Taxonomy" id="203119"/>
    <lineage>
        <taxon>Bacteria</taxon>
        <taxon>Bacillati</taxon>
        <taxon>Bacillota</taxon>
        <taxon>Clostridia</taxon>
        <taxon>Eubacteriales</taxon>
        <taxon>Oscillospiraceae</taxon>
        <taxon>Acetivibrio</taxon>
    </lineage>
</organism>
<feature type="chain" id="PRO_0000436545" description="Anti-sigma-I factor RsgI2">
    <location>
        <begin position="1"/>
        <end position="671"/>
    </location>
</feature>
<feature type="topological domain" description="Cytoplasmic" evidence="9">
    <location>
        <begin position="1"/>
        <end position="57"/>
    </location>
</feature>
<feature type="transmembrane region" description="Helical" evidence="2">
    <location>
        <begin position="58"/>
        <end position="78"/>
    </location>
</feature>
<feature type="topological domain" description="Extracellular" evidence="9">
    <location>
        <begin position="79"/>
        <end position="671"/>
    </location>
</feature>
<feature type="domain" description="RsgI N-terminal anti-sigma" evidence="4">
    <location>
        <begin position="4"/>
        <end position="51"/>
    </location>
</feature>
<feature type="domain" description="CBM3" evidence="3">
    <location>
        <begin position="508"/>
        <end position="671"/>
    </location>
</feature>
<feature type="region of interest" description="Disordered" evidence="5">
    <location>
        <begin position="290"/>
        <end position="323"/>
    </location>
</feature>
<feature type="region of interest" description="Disordered" evidence="5">
    <location>
        <begin position="359"/>
        <end position="505"/>
    </location>
</feature>
<feature type="compositionally biased region" description="Low complexity" evidence="5">
    <location>
        <begin position="359"/>
        <end position="379"/>
    </location>
</feature>
<feature type="compositionally biased region" description="Pro residues" evidence="5">
    <location>
        <begin position="380"/>
        <end position="400"/>
    </location>
</feature>
<feature type="compositionally biased region" description="Low complexity" evidence="5">
    <location>
        <begin position="401"/>
        <end position="425"/>
    </location>
</feature>
<feature type="compositionally biased region" description="Pro residues" evidence="5">
    <location>
        <begin position="426"/>
        <end position="446"/>
    </location>
</feature>
<feature type="compositionally biased region" description="Low complexity" evidence="5">
    <location>
        <begin position="447"/>
        <end position="491"/>
    </location>
</feature>
<feature type="compositionally biased region" description="Pro residues" evidence="5">
    <location>
        <begin position="492"/>
        <end position="502"/>
    </location>
</feature>
<feature type="binding site" evidence="7 11">
    <location>
        <position position="554"/>
    </location>
    <ligand>
        <name>Ca(2+)</name>
        <dbReference type="ChEBI" id="CHEBI:29108"/>
    </ligand>
</feature>
<feature type="binding site" evidence="7 11">
    <location>
        <position position="556"/>
    </location>
    <ligand>
        <name>Ca(2+)</name>
        <dbReference type="ChEBI" id="CHEBI:29108"/>
    </ligand>
</feature>
<feature type="binding site" evidence="7 11">
    <location>
        <position position="637"/>
    </location>
    <ligand>
        <name>Ca(2+)</name>
        <dbReference type="ChEBI" id="CHEBI:29108"/>
    </ligand>
</feature>
<feature type="binding site" evidence="7 11">
    <location>
        <position position="640"/>
    </location>
    <ligand>
        <name>Ca(2+)</name>
        <dbReference type="ChEBI" id="CHEBI:29108"/>
    </ligand>
</feature>
<feature type="binding site" evidence="7 11">
    <location>
        <position position="641"/>
    </location>
    <ligand>
        <name>Ca(2+)</name>
        <dbReference type="ChEBI" id="CHEBI:29108"/>
    </ligand>
</feature>
<feature type="strand" evidence="13">
    <location>
        <begin position="90"/>
        <end position="95"/>
    </location>
</feature>
<feature type="strand" evidence="13">
    <location>
        <begin position="99"/>
        <end position="104"/>
    </location>
</feature>
<feature type="strand" evidence="13">
    <location>
        <begin position="109"/>
        <end position="117"/>
    </location>
</feature>
<feature type="helix" evidence="13">
    <location>
        <begin position="118"/>
        <end position="120"/>
    </location>
</feature>
<feature type="helix" evidence="13">
    <location>
        <begin position="121"/>
        <end position="127"/>
    </location>
</feature>
<feature type="helix" evidence="13">
    <location>
        <begin position="134"/>
        <end position="147"/>
    </location>
</feature>
<feature type="strand" evidence="13">
    <location>
        <begin position="153"/>
        <end position="155"/>
    </location>
</feature>
<feature type="strand" evidence="13">
    <location>
        <begin position="157"/>
        <end position="164"/>
    </location>
</feature>
<feature type="helix" evidence="13">
    <location>
        <begin position="177"/>
        <end position="192"/>
    </location>
</feature>
<feature type="strand" evidence="13">
    <location>
        <begin position="195"/>
        <end position="200"/>
    </location>
</feature>
<feature type="helix" evidence="13">
    <location>
        <begin position="203"/>
        <end position="211"/>
    </location>
</feature>
<feature type="helix" evidence="13">
    <location>
        <begin position="216"/>
        <end position="227"/>
    </location>
</feature>
<feature type="helix" evidence="13">
    <location>
        <begin position="234"/>
        <end position="239"/>
    </location>
</feature>
<feature type="helix" evidence="13">
    <location>
        <begin position="242"/>
        <end position="249"/>
    </location>
</feature>
<feature type="strand" evidence="12">
    <location>
        <begin position="512"/>
        <end position="519"/>
    </location>
</feature>
<feature type="strand" evidence="12">
    <location>
        <begin position="523"/>
        <end position="528"/>
    </location>
</feature>
<feature type="strand" evidence="12">
    <location>
        <begin position="530"/>
        <end position="536"/>
    </location>
</feature>
<feature type="strand" evidence="12">
    <location>
        <begin position="538"/>
        <end position="540"/>
    </location>
</feature>
<feature type="helix" evidence="12">
    <location>
        <begin position="544"/>
        <end position="546"/>
    </location>
</feature>
<feature type="strand" evidence="12">
    <location>
        <begin position="547"/>
        <end position="553"/>
    </location>
</feature>
<feature type="strand" evidence="12">
    <location>
        <begin position="560"/>
        <end position="568"/>
    </location>
</feature>
<feature type="helix" evidence="12">
    <location>
        <begin position="572"/>
        <end position="574"/>
    </location>
</feature>
<feature type="strand" evidence="12">
    <location>
        <begin position="575"/>
        <end position="586"/>
    </location>
</feature>
<feature type="strand" evidence="12">
    <location>
        <begin position="589"/>
        <end position="597"/>
    </location>
</feature>
<feature type="strand" evidence="12">
    <location>
        <begin position="609"/>
        <end position="618"/>
    </location>
</feature>
<feature type="helix" evidence="12">
    <location>
        <begin position="619"/>
        <end position="622"/>
    </location>
</feature>
<feature type="helix" evidence="12">
    <location>
        <begin position="631"/>
        <end position="633"/>
    </location>
</feature>
<feature type="strand" evidence="12">
    <location>
        <begin position="636"/>
        <end position="638"/>
    </location>
</feature>
<feature type="strand" evidence="12">
    <location>
        <begin position="657"/>
        <end position="661"/>
    </location>
</feature>
<feature type="strand" evidence="12">
    <location>
        <begin position="664"/>
        <end position="667"/>
    </location>
</feature>
<proteinExistence type="evidence at protein level"/>
<comment type="function">
    <text evidence="1">Anti-sigma factor for SigI2. Negatively regulates SigI2 activity through direct interaction. Binding of the polysaccharide substrate to the extracellular C-terminal sensing domain of RsgI2 may induce a conformational change in its N-terminal cytoplasmic region, leading to the release and activation of SigI2.</text>
</comment>
<comment type="subunit">
    <text evidence="4 6">Interacts (via RsgI N-terminal anti-sigma domain) with SigI2.</text>
</comment>
<comment type="subcellular location">
    <subcellularLocation>
        <location evidence="9">Cell membrane</location>
        <topology evidence="2">Single-pass membrane protein</topology>
    </subcellularLocation>
</comment>
<dbReference type="EMBL" id="CP000568">
    <property type="protein sequence ID" value="ABN51506.1"/>
    <property type="molecule type" value="Genomic_DNA"/>
</dbReference>
<dbReference type="PDB" id="4B9P">
    <property type="method" value="X-ray"/>
    <property type="resolution" value="1.18 A"/>
    <property type="chains" value="A=506-671"/>
</dbReference>
<dbReference type="PDB" id="8HDJ">
    <property type="method" value="X-ray"/>
    <property type="resolution" value="1.85 A"/>
    <property type="chains" value="B/D/F/H=98-259"/>
</dbReference>
<dbReference type="PDBsum" id="4B9P"/>
<dbReference type="PDBsum" id="8HDJ"/>
<dbReference type="SMR" id="A3DC27"/>
<dbReference type="DIP" id="DIP-59452N"/>
<dbReference type="IntAct" id="A3DC27">
    <property type="interactions" value="1"/>
</dbReference>
<dbReference type="STRING" id="203119.Cthe_0267"/>
<dbReference type="CAZy" id="CBM3">
    <property type="family name" value="Carbohydrate-Binding Module Family 3"/>
</dbReference>
<dbReference type="KEGG" id="cth:Cthe_0267"/>
<dbReference type="eggNOG" id="COG4447">
    <property type="taxonomic scope" value="Bacteria"/>
</dbReference>
<dbReference type="HOGENOM" id="CLU_409228_0_0_9"/>
<dbReference type="EvolutionaryTrace" id="A3DC27"/>
<dbReference type="Proteomes" id="UP000002145">
    <property type="component" value="Chromosome"/>
</dbReference>
<dbReference type="GO" id="GO:0005886">
    <property type="term" value="C:plasma membrane"/>
    <property type="evidence" value="ECO:0007669"/>
    <property type="project" value="UniProtKB-SubCell"/>
</dbReference>
<dbReference type="GO" id="GO:0030248">
    <property type="term" value="F:cellulose binding"/>
    <property type="evidence" value="ECO:0007669"/>
    <property type="project" value="InterPro"/>
</dbReference>
<dbReference type="GO" id="GO:0046872">
    <property type="term" value="F:metal ion binding"/>
    <property type="evidence" value="ECO:0007669"/>
    <property type="project" value="UniProtKB-KW"/>
</dbReference>
<dbReference type="GO" id="GO:0005975">
    <property type="term" value="P:carbohydrate metabolic process"/>
    <property type="evidence" value="ECO:0007669"/>
    <property type="project" value="InterPro"/>
</dbReference>
<dbReference type="Gene3D" id="2.60.40.710">
    <property type="entry name" value="Endoglucanase-like"/>
    <property type="match status" value="1"/>
</dbReference>
<dbReference type="InterPro" id="IPR024449">
    <property type="entry name" value="Anti-sigma_RsgI_N"/>
</dbReference>
<dbReference type="InterPro" id="IPR008965">
    <property type="entry name" value="CBM2/CBM3_carb-bd_dom_sf"/>
</dbReference>
<dbReference type="InterPro" id="IPR001956">
    <property type="entry name" value="CBM3"/>
</dbReference>
<dbReference type="InterPro" id="IPR036966">
    <property type="entry name" value="CBM3_sf"/>
</dbReference>
<dbReference type="InterPro" id="IPR055431">
    <property type="entry name" value="RsgI_M"/>
</dbReference>
<dbReference type="Pfam" id="PF00942">
    <property type="entry name" value="CBM_3"/>
    <property type="match status" value="1"/>
</dbReference>
<dbReference type="Pfam" id="PF23750">
    <property type="entry name" value="RsgI_M"/>
    <property type="match status" value="1"/>
</dbReference>
<dbReference type="Pfam" id="PF12791">
    <property type="entry name" value="RsgI_N"/>
    <property type="match status" value="1"/>
</dbReference>
<dbReference type="SMART" id="SM01067">
    <property type="entry name" value="CBM_3"/>
    <property type="match status" value="1"/>
</dbReference>
<dbReference type="SUPFAM" id="SSF49384">
    <property type="entry name" value="Carbohydrate-binding domain"/>
    <property type="match status" value="1"/>
</dbReference>
<dbReference type="PROSITE" id="PS51172">
    <property type="entry name" value="CBM3"/>
    <property type="match status" value="1"/>
</dbReference>
<dbReference type="PROSITE" id="PS51849">
    <property type="entry name" value="RSGI_N"/>
    <property type="match status" value="1"/>
</dbReference>
<reference key="1">
    <citation type="submission" date="2007-02" db="EMBL/GenBank/DDBJ databases">
        <title>Complete sequence of Clostridium thermocellum ATCC 27405.</title>
        <authorList>
            <consortium name="US DOE Joint Genome Institute"/>
            <person name="Copeland A."/>
            <person name="Lucas S."/>
            <person name="Lapidus A."/>
            <person name="Barry K."/>
            <person name="Detter J.C."/>
            <person name="Glavina del Rio T."/>
            <person name="Hammon N."/>
            <person name="Israni S."/>
            <person name="Dalin E."/>
            <person name="Tice H."/>
            <person name="Pitluck S."/>
            <person name="Chertkov O."/>
            <person name="Brettin T."/>
            <person name="Bruce D."/>
            <person name="Han C."/>
            <person name="Tapia R."/>
            <person name="Gilna P."/>
            <person name="Schmutz J."/>
            <person name="Larimer F."/>
            <person name="Land M."/>
            <person name="Hauser L."/>
            <person name="Kyrpides N."/>
            <person name="Mikhailova N."/>
            <person name="Wu J.H.D."/>
            <person name="Newcomb M."/>
            <person name="Richardson P."/>
        </authorList>
    </citation>
    <scope>NUCLEOTIDE SEQUENCE [LARGE SCALE GENOMIC DNA]</scope>
    <source>
        <strain>ATCC 27405 / DSM 1237 / JCM 9322 / NBRC 103400 / NCIMB 10682 / NRRL B-4536 / VPI 7372</strain>
    </source>
</reference>
<reference key="2">
    <citation type="journal article" date="2010" name="FEMS Microbiol. Lett.">
        <title>The unique set of putative membrane-associated anti-sigma factors in Clostridium thermocellum suggests a novel extracellular carbohydrate-sensing mechanism involved in gene regulation.</title>
        <authorList>
            <person name="Kahel-Raifer H."/>
            <person name="Jindou S."/>
            <person name="Bahari L."/>
            <person name="Nataf Y."/>
            <person name="Shoham Y."/>
            <person name="Bayer E.A."/>
            <person name="Borovok I."/>
            <person name="Lamed R."/>
        </authorList>
    </citation>
    <scope>NOMENCLATURE</scope>
    <source>
        <strain>ATCC 27405 / DSM 1237 / JCM 9322 / NBRC 103400 / NCIMB 10682 / NRRL B-4536 / VPI 7372</strain>
    </source>
</reference>
<reference key="3">
    <citation type="journal article" date="2010" name="Proc. Natl. Acad. Sci. U.S.A.">
        <title>Clostridium thermocellum cellulosomal genes are regulated by extracytoplasmic polysaccharides via alternative sigma factors.</title>
        <authorList>
            <person name="Nataf Y."/>
            <person name="Bahari L."/>
            <person name="Kahel-Raifer H."/>
            <person name="Borovok I."/>
            <person name="Lamed R."/>
            <person name="Bayer E.A."/>
            <person name="Sonenshein A.L."/>
            <person name="Shoham Y."/>
        </authorList>
    </citation>
    <scope>INTERACTION WITH SIGI2</scope>
</reference>
<reference evidence="11" key="4">
    <citation type="journal article" date="2014" name="Acta Crystallogr. D">
        <title>Fine-structural variance of family 3 carbohydrate-binding modules as extracellular biomass-sensing components of Clostridium thermocellum anti-sigmaI factors.</title>
        <authorList>
            <person name="Yaniv O."/>
            <person name="Fichman G."/>
            <person name="Borovok I."/>
            <person name="Shoham Y."/>
            <person name="Bayer E.A."/>
            <person name="Lamed R."/>
            <person name="Shimon L.J."/>
            <person name="Frolow F."/>
        </authorList>
    </citation>
    <scope>X-RAY CRYSTALLOGRAPHY (1.18 ANGSTROMS) OF 506-671 IN COMPLEX WITH CALCIUM</scope>
    <source>
        <strain>ATCC 27405 / DSM 1237 / JCM 9322 / NBRC 103400 / NCIMB 10682 / NRRL B-4536 / VPI 7372</strain>
    </source>
</reference>
<protein>
    <recommendedName>
        <fullName evidence="9">Anti-sigma-I factor RsgI2</fullName>
    </recommendedName>
</protein>
<evidence type="ECO:0000250" key="1">
    <source>
        <dbReference type="UniProtKB" id="A3DBH1"/>
    </source>
</evidence>
<evidence type="ECO:0000255" key="2"/>
<evidence type="ECO:0000255" key="3">
    <source>
        <dbReference type="PROSITE-ProRule" id="PRU00513"/>
    </source>
</evidence>
<evidence type="ECO:0000255" key="4">
    <source>
        <dbReference type="PROSITE-ProRule" id="PRU01196"/>
    </source>
</evidence>
<evidence type="ECO:0000256" key="5">
    <source>
        <dbReference type="SAM" id="MobiDB-lite"/>
    </source>
</evidence>
<evidence type="ECO:0000269" key="6">
    <source>
    </source>
</evidence>
<evidence type="ECO:0000269" key="7">
    <source>
    </source>
</evidence>
<evidence type="ECO:0000303" key="8">
    <source>
    </source>
</evidence>
<evidence type="ECO:0000305" key="9"/>
<evidence type="ECO:0000312" key="10">
    <source>
        <dbReference type="EMBL" id="ABN51506.1"/>
    </source>
</evidence>
<evidence type="ECO:0007744" key="11">
    <source>
        <dbReference type="PDB" id="4B9P"/>
    </source>
</evidence>
<evidence type="ECO:0007829" key="12">
    <source>
        <dbReference type="PDB" id="4B9P"/>
    </source>
</evidence>
<evidence type="ECO:0007829" key="13">
    <source>
        <dbReference type="PDB" id="8HDJ"/>
    </source>
</evidence>
<name>RSGI2_ACET2</name>
<keyword id="KW-0002">3D-structure</keyword>
<keyword id="KW-0106">Calcium</keyword>
<keyword id="KW-1003">Cell membrane</keyword>
<keyword id="KW-0472">Membrane</keyword>
<keyword id="KW-0479">Metal-binding</keyword>
<keyword id="KW-1185">Reference proteome</keyword>
<keyword id="KW-0812">Transmembrane</keyword>
<keyword id="KW-1133">Transmembrane helix</keyword>
<accession>A3DC27</accession>